<sequence length="215" mass="23052">MRIFIDTANVEEIKAANDLGIIAGVTTNPSLIAREGRNFREIVEEIAAIVDGPISAEVVSTTAPEMVAEGVELAAIHPNIVIKIPMIAEGLKAVKELSARGIKTNVTLVFSANQALLAALAGATYVSPFVGRLDDISHDGLQVIADIVPIFAQYGFKTQIIAASIRHPLHVLEAARLGADIATVPFKVLMQMLKHPLTDTGLARFLADWEKVKNK</sequence>
<comment type="function">
    <text evidence="1">Transaldolase is important for the balance of metabolites in the pentose-phosphate pathway.</text>
</comment>
<comment type="catalytic activity">
    <reaction evidence="1">
        <text>D-sedoheptulose 7-phosphate + D-glyceraldehyde 3-phosphate = D-erythrose 4-phosphate + beta-D-fructose 6-phosphate</text>
        <dbReference type="Rhea" id="RHEA:17053"/>
        <dbReference type="ChEBI" id="CHEBI:16897"/>
        <dbReference type="ChEBI" id="CHEBI:57483"/>
        <dbReference type="ChEBI" id="CHEBI:57634"/>
        <dbReference type="ChEBI" id="CHEBI:59776"/>
        <dbReference type="EC" id="2.2.1.2"/>
    </reaction>
</comment>
<comment type="pathway">
    <text evidence="1">Carbohydrate degradation; pentose phosphate pathway; D-glyceraldehyde 3-phosphate and beta-D-fructose 6-phosphate from D-ribose 5-phosphate and D-xylulose 5-phosphate (non-oxidative stage): step 2/3.</text>
</comment>
<comment type="subcellular location">
    <subcellularLocation>
        <location evidence="1">Cytoplasm</location>
    </subcellularLocation>
</comment>
<comment type="similarity">
    <text evidence="1">Belongs to the transaldolase family. Type 3B subfamily.</text>
</comment>
<accession>Q2RFV4</accession>
<reference key="1">
    <citation type="journal article" date="2008" name="Environ. Microbiol.">
        <title>The complete genome sequence of Moorella thermoacetica (f. Clostridium thermoaceticum).</title>
        <authorList>
            <person name="Pierce E."/>
            <person name="Xie G."/>
            <person name="Barabote R.D."/>
            <person name="Saunders E."/>
            <person name="Han C.S."/>
            <person name="Detter J.C."/>
            <person name="Richardson P."/>
            <person name="Brettin T.S."/>
            <person name="Das A."/>
            <person name="Ljungdahl L.G."/>
            <person name="Ragsdale S.W."/>
        </authorList>
    </citation>
    <scope>NUCLEOTIDE SEQUENCE [LARGE SCALE GENOMIC DNA]</scope>
    <source>
        <strain>ATCC 39073 / JCM 9320</strain>
    </source>
</reference>
<evidence type="ECO:0000255" key="1">
    <source>
        <dbReference type="HAMAP-Rule" id="MF_00494"/>
    </source>
</evidence>
<proteinExistence type="inferred from homology"/>
<organism>
    <name type="scientific">Moorella thermoacetica (strain ATCC 39073 / JCM 9320)</name>
    <dbReference type="NCBI Taxonomy" id="264732"/>
    <lineage>
        <taxon>Bacteria</taxon>
        <taxon>Bacillati</taxon>
        <taxon>Bacillota</taxon>
        <taxon>Clostridia</taxon>
        <taxon>Moorellales</taxon>
        <taxon>Moorellaceae</taxon>
        <taxon>Moorella</taxon>
    </lineage>
</organism>
<gene>
    <name evidence="1" type="primary">tal</name>
    <name type="ordered locus">Moth_2403</name>
</gene>
<dbReference type="EC" id="2.2.1.2" evidence="1"/>
<dbReference type="EMBL" id="CP000232">
    <property type="protein sequence ID" value="ABC20685.1"/>
    <property type="molecule type" value="Genomic_DNA"/>
</dbReference>
<dbReference type="RefSeq" id="YP_431228.1">
    <property type="nucleotide sequence ID" value="NC_007644.1"/>
</dbReference>
<dbReference type="SMR" id="Q2RFV4"/>
<dbReference type="STRING" id="264732.Moth_2403"/>
<dbReference type="EnsemblBacteria" id="ABC20685">
    <property type="protein sequence ID" value="ABC20685"/>
    <property type="gene ID" value="Moth_2403"/>
</dbReference>
<dbReference type="KEGG" id="mta:Moth_2403"/>
<dbReference type="PATRIC" id="fig|264732.11.peg.2616"/>
<dbReference type="eggNOG" id="COG0176">
    <property type="taxonomic scope" value="Bacteria"/>
</dbReference>
<dbReference type="HOGENOM" id="CLU_079764_0_0_9"/>
<dbReference type="OrthoDB" id="9807051at2"/>
<dbReference type="UniPathway" id="UPA00115">
    <property type="reaction ID" value="UER00414"/>
</dbReference>
<dbReference type="GO" id="GO:0005737">
    <property type="term" value="C:cytoplasm"/>
    <property type="evidence" value="ECO:0007669"/>
    <property type="project" value="UniProtKB-SubCell"/>
</dbReference>
<dbReference type="GO" id="GO:0016832">
    <property type="term" value="F:aldehyde-lyase activity"/>
    <property type="evidence" value="ECO:0007669"/>
    <property type="project" value="InterPro"/>
</dbReference>
<dbReference type="GO" id="GO:0004801">
    <property type="term" value="F:transaldolase activity"/>
    <property type="evidence" value="ECO:0007669"/>
    <property type="project" value="UniProtKB-UniRule"/>
</dbReference>
<dbReference type="GO" id="GO:0005975">
    <property type="term" value="P:carbohydrate metabolic process"/>
    <property type="evidence" value="ECO:0007669"/>
    <property type="project" value="InterPro"/>
</dbReference>
<dbReference type="GO" id="GO:0006098">
    <property type="term" value="P:pentose-phosphate shunt"/>
    <property type="evidence" value="ECO:0007669"/>
    <property type="project" value="UniProtKB-UniRule"/>
</dbReference>
<dbReference type="CDD" id="cd00956">
    <property type="entry name" value="Transaldolase_FSA"/>
    <property type="match status" value="1"/>
</dbReference>
<dbReference type="FunFam" id="3.20.20.70:FF:000018">
    <property type="entry name" value="Probable transaldolase"/>
    <property type="match status" value="1"/>
</dbReference>
<dbReference type="Gene3D" id="3.20.20.70">
    <property type="entry name" value="Aldolase class I"/>
    <property type="match status" value="1"/>
</dbReference>
<dbReference type="HAMAP" id="MF_00494">
    <property type="entry name" value="Transaldolase_3b"/>
    <property type="match status" value="1"/>
</dbReference>
<dbReference type="InterPro" id="IPR013785">
    <property type="entry name" value="Aldolase_TIM"/>
</dbReference>
<dbReference type="InterPro" id="IPR001585">
    <property type="entry name" value="TAL/FSA"/>
</dbReference>
<dbReference type="InterPro" id="IPR022999">
    <property type="entry name" value="Transaldolase_3B"/>
</dbReference>
<dbReference type="InterPro" id="IPR004731">
    <property type="entry name" value="Transaldolase_3B/F6P_aldolase"/>
</dbReference>
<dbReference type="InterPro" id="IPR018225">
    <property type="entry name" value="Transaldolase_AS"/>
</dbReference>
<dbReference type="InterPro" id="IPR033919">
    <property type="entry name" value="TSA/FSA_arc/bac"/>
</dbReference>
<dbReference type="NCBIfam" id="TIGR00875">
    <property type="entry name" value="fsa_talC_mipB"/>
    <property type="match status" value="1"/>
</dbReference>
<dbReference type="PANTHER" id="PTHR10683:SF40">
    <property type="entry name" value="FRUCTOSE-6-PHOSPHATE ALDOLASE 1-RELATED"/>
    <property type="match status" value="1"/>
</dbReference>
<dbReference type="PANTHER" id="PTHR10683">
    <property type="entry name" value="TRANSALDOLASE"/>
    <property type="match status" value="1"/>
</dbReference>
<dbReference type="Pfam" id="PF00923">
    <property type="entry name" value="TAL_FSA"/>
    <property type="match status" value="1"/>
</dbReference>
<dbReference type="SUPFAM" id="SSF51569">
    <property type="entry name" value="Aldolase"/>
    <property type="match status" value="1"/>
</dbReference>
<dbReference type="PROSITE" id="PS01054">
    <property type="entry name" value="TRANSALDOLASE_1"/>
    <property type="match status" value="1"/>
</dbReference>
<protein>
    <recommendedName>
        <fullName evidence="1">Probable transaldolase</fullName>
        <ecNumber evidence="1">2.2.1.2</ecNumber>
    </recommendedName>
</protein>
<feature type="chain" id="PRO_1000126330" description="Probable transaldolase">
    <location>
        <begin position="1"/>
        <end position="215"/>
    </location>
</feature>
<feature type="active site" description="Schiff-base intermediate with substrate" evidence="1">
    <location>
        <position position="83"/>
    </location>
</feature>
<name>TAL_MOOTA</name>
<keyword id="KW-0963">Cytoplasm</keyword>
<keyword id="KW-0570">Pentose shunt</keyword>
<keyword id="KW-0704">Schiff base</keyword>
<keyword id="KW-0808">Transferase</keyword>